<organism evidence="7">
    <name type="scientific">Clitoria ternatea</name>
    <name type="common">Butterfly pea</name>
    <dbReference type="NCBI Taxonomy" id="43366"/>
    <lineage>
        <taxon>Eukaryota</taxon>
        <taxon>Viridiplantae</taxon>
        <taxon>Streptophyta</taxon>
        <taxon>Embryophyta</taxon>
        <taxon>Tracheophyta</taxon>
        <taxon>Spermatophyta</taxon>
        <taxon>Magnoliopsida</taxon>
        <taxon>eudicotyledons</taxon>
        <taxon>Gunneridae</taxon>
        <taxon>Pentapetalae</taxon>
        <taxon>rosids</taxon>
        <taxon>fabids</taxon>
        <taxon>Fabales</taxon>
        <taxon>Fabaceae</taxon>
        <taxon>Papilionoideae</taxon>
        <taxon>50 kb inversion clade</taxon>
        <taxon>NPAAA clade</taxon>
        <taxon>indigoferoid/millettioid clade</taxon>
        <taxon>Phaseoleae</taxon>
        <taxon>Clitoria</taxon>
    </lineage>
</organism>
<dbReference type="EMBL" id="JF931989">
    <property type="protein sequence ID" value="AEK26403.1"/>
    <property type="molecule type" value="mRNA"/>
</dbReference>
<dbReference type="SMR" id="G1CWH1"/>
<dbReference type="GO" id="GO:0006952">
    <property type="term" value="P:defense response"/>
    <property type="evidence" value="ECO:0007669"/>
    <property type="project" value="UniProtKB-KW"/>
</dbReference>
<dbReference type="InterPro" id="IPR032000">
    <property type="entry name" value="Albumin_I_a"/>
</dbReference>
<dbReference type="InterPro" id="IPR005535">
    <property type="entry name" value="Cyclotide"/>
</dbReference>
<dbReference type="InterPro" id="IPR036146">
    <property type="entry name" value="Cyclotide_sf"/>
</dbReference>
<dbReference type="Pfam" id="PF16720">
    <property type="entry name" value="Albumin_I_a"/>
    <property type="match status" value="1"/>
</dbReference>
<dbReference type="Pfam" id="PF03784">
    <property type="entry name" value="Cyclotide"/>
    <property type="match status" value="1"/>
</dbReference>
<dbReference type="SUPFAM" id="SSF57038">
    <property type="entry name" value="Cyclotides"/>
    <property type="match status" value="1"/>
</dbReference>
<dbReference type="PROSITE" id="PS51052">
    <property type="entry name" value="CYCLOTIDE"/>
    <property type="match status" value="1"/>
</dbReference>
<protein>
    <recommendedName>
        <fullName evidence="4">Cliotide T2</fullName>
    </recommendedName>
</protein>
<accession>G1CWH1</accession>
<sequence>MAYVRLTSLAVLFFLAASVMLNVKKTEGGEFLKCGESCVQGECYTPGCSCDWPICKKNHIIATNAKTVNQHRLLCESHEDCFKKGTGNYCAFFPDSDVHFGWCFYAESDGYLLKDFFKMSKDNLKMPMTIIN</sequence>
<name>CYC2_CLITE</name>
<comment type="function">
    <text evidence="1 2 3">Probably participates in a plant defense mechanism (Probable). Not active against Gram-negative bacteria E.coli ATCC 700926, K.pneumoniae ATTC 13883 and P.aeruginosa ATCC 39018 at concentration up to 100 uM (PubMed:21596752). Has cytotoxic but no hemolytic activity (PubMed:21596752).</text>
</comment>
<comment type="tissue specificity">
    <text evidence="3">Expressed in flower, stem, shoot and pod but not in root, leaf, seed and nodule (at protein level).</text>
</comment>
<comment type="domain">
    <text evidence="5">The presence of a 'disulfide through disulfide knot' structurally defines this protein as a knottin.</text>
</comment>
<comment type="PTM">
    <text evidence="2 3">This is a cyclic peptide.</text>
</comment>
<comment type="mass spectrometry"/>
<comment type="similarity">
    <text evidence="4">Belongs to the cyclotide family. Moebius subfamily.</text>
</comment>
<evidence type="ECO:0000255" key="1"/>
<evidence type="ECO:0000255" key="2">
    <source>
        <dbReference type="PROSITE-ProRule" id="PRU00395"/>
    </source>
</evidence>
<evidence type="ECO:0000269" key="3">
    <source>
    </source>
</evidence>
<evidence type="ECO:0000303" key="4">
    <source>
    </source>
</evidence>
<evidence type="ECO:0000305" key="5"/>
<evidence type="ECO:0000305" key="6">
    <source>
    </source>
</evidence>
<evidence type="ECO:0000312" key="7">
    <source>
        <dbReference type="EMBL" id="AEK26403.1"/>
    </source>
</evidence>
<feature type="signal peptide" evidence="3">
    <location>
        <begin position="1"/>
        <end position="28"/>
    </location>
</feature>
<feature type="peptide" id="PRO_0000440049" description="Cliotide T2" evidence="3">
    <location>
        <begin position="29"/>
        <end position="58"/>
    </location>
</feature>
<feature type="propeptide" id="PRO_0000440050" description="Removed in mature form" evidence="6">
    <location>
        <begin position="59"/>
        <end position="132"/>
    </location>
</feature>
<feature type="disulfide bond" evidence="2 3">
    <location>
        <begin position="34"/>
        <end position="48"/>
    </location>
</feature>
<feature type="disulfide bond" evidence="2 3">
    <location>
        <begin position="38"/>
        <end position="50"/>
    </location>
</feature>
<feature type="disulfide bond" evidence="2 3">
    <location>
        <begin position="43"/>
        <end position="55"/>
    </location>
</feature>
<feature type="cross-link" description="Cyclopeptide (Gly-Asn)" evidence="3">
    <location>
        <begin position="29"/>
        <end position="58"/>
    </location>
</feature>
<reference evidence="7" key="1">
    <citation type="journal article" date="2011" name="J. Biol. Chem.">
        <title>Discovery and characterization of novel cyclotides originated from chimeric precursors consisting of albumin-1 chain a and cyclotide domains in the fabaceae family.</title>
        <authorList>
            <person name="Nguyen G.K."/>
            <person name="Zhang S."/>
            <person name="Nguyen N.T."/>
            <person name="Nguyen P.Q."/>
            <person name="Chiu M.S."/>
            <person name="Hardjojo A."/>
            <person name="Tam J.P."/>
        </authorList>
    </citation>
    <scope>NUCLEOTIDE SEQUENCE [MRNA]</scope>
    <scope>PROTEIN SEQUENCE OF 29-58</scope>
    <scope>FUNCTION</scope>
    <scope>DISULFIDE BONDS</scope>
    <scope>CYCLIZATION</scope>
    <scope>TISSUE SPECIFICITY</scope>
    <scope>MASS SPECTROMETRY</scope>
    <scope>IDENTIFICATION BY MASS SPECTROMETRY</scope>
</reference>
<proteinExistence type="evidence at protein level"/>
<keyword id="KW-0903">Direct protein sequencing</keyword>
<keyword id="KW-1015">Disulfide bond</keyword>
<keyword id="KW-0960">Knottin</keyword>
<keyword id="KW-0611">Plant defense</keyword>
<keyword id="KW-0732">Signal</keyword>